<sequence>MWESKFAKESLTFDDVLLIPAQSDILPKDVDLSVQLSDKVKLNIPVISAGMDTVTESKMAIAMARQGGLGVIHKNMGVEEQADEVQKVKRSENGVISNPFFLTPEESVYEAEALMGKYRISGVPIVDNKEDRNLVGILTNRDLRFIEDFSIKIVDVMTQENLITAPVNTTLEEAEKILQKHKIEKLPLVKDGRLEGLITIKDIEKVIEFPNAAKDEHGRLLVAAAIGISKDTDIRAQKLVEAGVDVLVIDTAHGHSKGVIDQVKHIKKTYPEITLVAGNVATAEATKDLFEAGADIVKVGIGPGSICTTRVVAGVGVPQITAIYDCATEARKHGKAIIADGGIKFSGDIIKALAAGGHAVMLGSLLAGTEESPGATEIFQGRQYKVYRGMGSLGAMEKGSNDRYFQEDKAPKKFVPEGIEGRTAYKGALQDTIYQLMGGVRAGMGYTGSHDLRELREEAQFTRMGPAGLAESHPHNIQITKESPNYSF</sequence>
<feature type="chain" id="PRO_0000287361" description="Inosine-5'-monophosphate dehydrogenase">
    <location>
        <begin position="1"/>
        <end position="488"/>
    </location>
</feature>
<feature type="domain" description="CBS 1" evidence="1">
    <location>
        <begin position="95"/>
        <end position="153"/>
    </location>
</feature>
<feature type="domain" description="CBS 2" evidence="1">
    <location>
        <begin position="157"/>
        <end position="216"/>
    </location>
</feature>
<feature type="region of interest" description="Disordered" evidence="2">
    <location>
        <begin position="468"/>
        <end position="488"/>
    </location>
</feature>
<feature type="compositionally biased region" description="Polar residues" evidence="2">
    <location>
        <begin position="475"/>
        <end position="488"/>
    </location>
</feature>
<feature type="active site" description="Thioimidate intermediate" evidence="1">
    <location>
        <position position="307"/>
    </location>
</feature>
<feature type="active site" description="Proton acceptor" evidence="1">
    <location>
        <position position="403"/>
    </location>
</feature>
<feature type="binding site" evidence="1">
    <location>
        <position position="250"/>
    </location>
    <ligand>
        <name>NAD(+)</name>
        <dbReference type="ChEBI" id="CHEBI:57540"/>
    </ligand>
</feature>
<feature type="binding site" evidence="1">
    <location>
        <begin position="300"/>
        <end position="302"/>
    </location>
    <ligand>
        <name>NAD(+)</name>
        <dbReference type="ChEBI" id="CHEBI:57540"/>
    </ligand>
</feature>
<feature type="binding site" description="in other chain" evidence="1">
    <location>
        <position position="302"/>
    </location>
    <ligand>
        <name>K(+)</name>
        <dbReference type="ChEBI" id="CHEBI:29103"/>
        <note>ligand shared between two tetrameric partners</note>
    </ligand>
</feature>
<feature type="binding site" description="in other chain" evidence="1">
    <location>
        <position position="304"/>
    </location>
    <ligand>
        <name>K(+)</name>
        <dbReference type="ChEBI" id="CHEBI:29103"/>
        <note>ligand shared between two tetrameric partners</note>
    </ligand>
</feature>
<feature type="binding site" evidence="1">
    <location>
        <position position="305"/>
    </location>
    <ligand>
        <name>IMP</name>
        <dbReference type="ChEBI" id="CHEBI:58053"/>
    </ligand>
</feature>
<feature type="binding site" description="in other chain" evidence="1">
    <location>
        <position position="307"/>
    </location>
    <ligand>
        <name>K(+)</name>
        <dbReference type="ChEBI" id="CHEBI:29103"/>
        <note>ligand shared between two tetrameric partners</note>
    </ligand>
</feature>
<feature type="binding site" evidence="1">
    <location>
        <begin position="340"/>
        <end position="342"/>
    </location>
    <ligand>
        <name>IMP</name>
        <dbReference type="ChEBI" id="CHEBI:58053"/>
    </ligand>
</feature>
<feature type="binding site" evidence="1">
    <location>
        <begin position="363"/>
        <end position="364"/>
    </location>
    <ligand>
        <name>IMP</name>
        <dbReference type="ChEBI" id="CHEBI:58053"/>
    </ligand>
</feature>
<feature type="binding site" evidence="1">
    <location>
        <begin position="387"/>
        <end position="391"/>
    </location>
    <ligand>
        <name>IMP</name>
        <dbReference type="ChEBI" id="CHEBI:58053"/>
    </ligand>
</feature>
<feature type="binding site" evidence="1">
    <location>
        <position position="417"/>
    </location>
    <ligand>
        <name>IMP</name>
        <dbReference type="ChEBI" id="CHEBI:58053"/>
    </ligand>
</feature>
<feature type="binding site" evidence="1">
    <location>
        <position position="471"/>
    </location>
    <ligand>
        <name>K(+)</name>
        <dbReference type="ChEBI" id="CHEBI:29103"/>
        <note>ligand shared between two tetrameric partners</note>
    </ligand>
</feature>
<feature type="binding site" evidence="1">
    <location>
        <position position="472"/>
    </location>
    <ligand>
        <name>K(+)</name>
        <dbReference type="ChEBI" id="CHEBI:29103"/>
        <note>ligand shared between two tetrameric partners</note>
    </ligand>
</feature>
<feature type="binding site" evidence="1">
    <location>
        <position position="473"/>
    </location>
    <ligand>
        <name>K(+)</name>
        <dbReference type="ChEBI" id="CHEBI:29103"/>
        <note>ligand shared between two tetrameric partners</note>
    </ligand>
</feature>
<proteinExistence type="inferred from homology"/>
<organism>
    <name type="scientific">Staphylococcus aureus (strain USA300)</name>
    <dbReference type="NCBI Taxonomy" id="367830"/>
    <lineage>
        <taxon>Bacteria</taxon>
        <taxon>Bacillati</taxon>
        <taxon>Bacillota</taxon>
        <taxon>Bacilli</taxon>
        <taxon>Bacillales</taxon>
        <taxon>Staphylococcaceae</taxon>
        <taxon>Staphylococcus</taxon>
    </lineage>
</organism>
<dbReference type="EC" id="1.1.1.205" evidence="1"/>
<dbReference type="EMBL" id="CP000255">
    <property type="protein sequence ID" value="ABD20543.1"/>
    <property type="molecule type" value="Genomic_DNA"/>
</dbReference>
<dbReference type="RefSeq" id="WP_000264071.1">
    <property type="nucleotide sequence ID" value="NZ_CP027476.1"/>
</dbReference>
<dbReference type="SMR" id="Q2FJM6"/>
<dbReference type="GeneID" id="66838696"/>
<dbReference type="KEGG" id="saa:SAUSA300_0388"/>
<dbReference type="HOGENOM" id="CLU_022552_1_0_9"/>
<dbReference type="OMA" id="MGYCGAK"/>
<dbReference type="UniPathway" id="UPA00601">
    <property type="reaction ID" value="UER00295"/>
</dbReference>
<dbReference type="Proteomes" id="UP000001939">
    <property type="component" value="Chromosome"/>
</dbReference>
<dbReference type="GO" id="GO:0003938">
    <property type="term" value="F:IMP dehydrogenase activity"/>
    <property type="evidence" value="ECO:0007669"/>
    <property type="project" value="UniProtKB-UniRule"/>
</dbReference>
<dbReference type="GO" id="GO:0046872">
    <property type="term" value="F:metal ion binding"/>
    <property type="evidence" value="ECO:0007669"/>
    <property type="project" value="UniProtKB-UniRule"/>
</dbReference>
<dbReference type="GO" id="GO:0000166">
    <property type="term" value="F:nucleotide binding"/>
    <property type="evidence" value="ECO:0007669"/>
    <property type="project" value="UniProtKB-UniRule"/>
</dbReference>
<dbReference type="GO" id="GO:0006177">
    <property type="term" value="P:GMP biosynthetic process"/>
    <property type="evidence" value="ECO:0007669"/>
    <property type="project" value="UniProtKB-UniRule"/>
</dbReference>
<dbReference type="GO" id="GO:0006183">
    <property type="term" value="P:GTP biosynthetic process"/>
    <property type="evidence" value="ECO:0007669"/>
    <property type="project" value="TreeGrafter"/>
</dbReference>
<dbReference type="CDD" id="cd04601">
    <property type="entry name" value="CBS_pair_IMPDH"/>
    <property type="match status" value="1"/>
</dbReference>
<dbReference type="CDD" id="cd00381">
    <property type="entry name" value="IMPDH"/>
    <property type="match status" value="1"/>
</dbReference>
<dbReference type="FunFam" id="3.20.20.70:FF:000003">
    <property type="entry name" value="GMP reductase"/>
    <property type="match status" value="1"/>
</dbReference>
<dbReference type="Gene3D" id="3.20.20.70">
    <property type="entry name" value="Aldolase class I"/>
    <property type="match status" value="1"/>
</dbReference>
<dbReference type="HAMAP" id="MF_01964">
    <property type="entry name" value="IMPDH"/>
    <property type="match status" value="1"/>
</dbReference>
<dbReference type="InterPro" id="IPR013785">
    <property type="entry name" value="Aldolase_TIM"/>
</dbReference>
<dbReference type="InterPro" id="IPR000644">
    <property type="entry name" value="CBS_dom"/>
</dbReference>
<dbReference type="InterPro" id="IPR046342">
    <property type="entry name" value="CBS_dom_sf"/>
</dbReference>
<dbReference type="InterPro" id="IPR005990">
    <property type="entry name" value="IMP_DH"/>
</dbReference>
<dbReference type="InterPro" id="IPR015875">
    <property type="entry name" value="IMP_DH/GMP_Rdtase_CS"/>
</dbReference>
<dbReference type="InterPro" id="IPR001093">
    <property type="entry name" value="IMP_DH_GMPRt"/>
</dbReference>
<dbReference type="NCBIfam" id="TIGR01302">
    <property type="entry name" value="IMP_dehydrog"/>
    <property type="match status" value="1"/>
</dbReference>
<dbReference type="PANTHER" id="PTHR11911:SF111">
    <property type="entry name" value="INOSINE-5'-MONOPHOSPHATE DEHYDROGENASE"/>
    <property type="match status" value="1"/>
</dbReference>
<dbReference type="PANTHER" id="PTHR11911">
    <property type="entry name" value="INOSINE-5-MONOPHOSPHATE DEHYDROGENASE RELATED"/>
    <property type="match status" value="1"/>
</dbReference>
<dbReference type="Pfam" id="PF00571">
    <property type="entry name" value="CBS"/>
    <property type="match status" value="2"/>
</dbReference>
<dbReference type="Pfam" id="PF00478">
    <property type="entry name" value="IMPDH"/>
    <property type="match status" value="1"/>
</dbReference>
<dbReference type="PIRSF" id="PIRSF000130">
    <property type="entry name" value="IMPDH"/>
    <property type="match status" value="1"/>
</dbReference>
<dbReference type="SMART" id="SM00116">
    <property type="entry name" value="CBS"/>
    <property type="match status" value="2"/>
</dbReference>
<dbReference type="SMART" id="SM01240">
    <property type="entry name" value="IMPDH"/>
    <property type="match status" value="1"/>
</dbReference>
<dbReference type="SUPFAM" id="SSF54631">
    <property type="entry name" value="CBS-domain pair"/>
    <property type="match status" value="1"/>
</dbReference>
<dbReference type="SUPFAM" id="SSF51412">
    <property type="entry name" value="Inosine monophosphate dehydrogenase (IMPDH)"/>
    <property type="match status" value="1"/>
</dbReference>
<dbReference type="PROSITE" id="PS51371">
    <property type="entry name" value="CBS"/>
    <property type="match status" value="2"/>
</dbReference>
<dbReference type="PROSITE" id="PS00487">
    <property type="entry name" value="IMP_DH_GMP_RED"/>
    <property type="match status" value="1"/>
</dbReference>
<comment type="function">
    <text evidence="1">Catalyzes the conversion of inosine 5'-phosphate (IMP) to xanthosine 5'-phosphate (XMP), the first committed and rate-limiting step in the de novo synthesis of guanine nucleotides, and therefore plays an important role in the regulation of cell growth.</text>
</comment>
<comment type="catalytic activity">
    <reaction evidence="1">
        <text>IMP + NAD(+) + H2O = XMP + NADH + H(+)</text>
        <dbReference type="Rhea" id="RHEA:11708"/>
        <dbReference type="ChEBI" id="CHEBI:15377"/>
        <dbReference type="ChEBI" id="CHEBI:15378"/>
        <dbReference type="ChEBI" id="CHEBI:57464"/>
        <dbReference type="ChEBI" id="CHEBI:57540"/>
        <dbReference type="ChEBI" id="CHEBI:57945"/>
        <dbReference type="ChEBI" id="CHEBI:58053"/>
        <dbReference type="EC" id="1.1.1.205"/>
    </reaction>
</comment>
<comment type="cofactor">
    <cofactor evidence="1">
        <name>K(+)</name>
        <dbReference type="ChEBI" id="CHEBI:29103"/>
    </cofactor>
</comment>
<comment type="activity regulation">
    <text evidence="1">Mycophenolic acid (MPA) is a non-competitive inhibitor that prevents formation of the closed enzyme conformation by binding to the same site as the amobile flap. In contrast, mizoribine monophosphate (MZP) is a competitive inhibitor that induces the closed conformation. MPA is a potent inhibitor of mammalian IMPDHs but a poor inhibitor of the bacterial enzymes. MZP is a more potent inhibitor of bacterial IMPDH.</text>
</comment>
<comment type="pathway">
    <text evidence="1">Purine metabolism; XMP biosynthesis via de novo pathway; XMP from IMP: step 1/1.</text>
</comment>
<comment type="subunit">
    <text evidence="1">Homotetramer.</text>
</comment>
<comment type="similarity">
    <text evidence="1">Belongs to the IMPDH/GMPR family.</text>
</comment>
<gene>
    <name evidence="1" type="primary">guaB</name>
    <name type="ordered locus">SAUSA300_0388</name>
</gene>
<evidence type="ECO:0000255" key="1">
    <source>
        <dbReference type="HAMAP-Rule" id="MF_01964"/>
    </source>
</evidence>
<evidence type="ECO:0000256" key="2">
    <source>
        <dbReference type="SAM" id="MobiDB-lite"/>
    </source>
</evidence>
<name>IMDH_STAA3</name>
<keyword id="KW-0129">CBS domain</keyword>
<keyword id="KW-0332">GMP biosynthesis</keyword>
<keyword id="KW-0479">Metal-binding</keyword>
<keyword id="KW-0520">NAD</keyword>
<keyword id="KW-0560">Oxidoreductase</keyword>
<keyword id="KW-0630">Potassium</keyword>
<keyword id="KW-0658">Purine biosynthesis</keyword>
<keyword id="KW-0677">Repeat</keyword>
<accession>Q2FJM6</accession>
<protein>
    <recommendedName>
        <fullName evidence="1">Inosine-5'-monophosphate dehydrogenase</fullName>
        <shortName evidence="1">IMP dehydrogenase</shortName>
        <shortName evidence="1">IMPD</shortName>
        <shortName evidence="1">IMPDH</shortName>
        <ecNumber evidence="1">1.1.1.205</ecNumber>
    </recommendedName>
</protein>
<reference key="1">
    <citation type="journal article" date="2006" name="Lancet">
        <title>Complete genome sequence of USA300, an epidemic clone of community-acquired meticillin-resistant Staphylococcus aureus.</title>
        <authorList>
            <person name="Diep B.A."/>
            <person name="Gill S.R."/>
            <person name="Chang R.F."/>
            <person name="Phan T.H."/>
            <person name="Chen J.H."/>
            <person name="Davidson M.G."/>
            <person name="Lin F."/>
            <person name="Lin J."/>
            <person name="Carleton H.A."/>
            <person name="Mongodin E.F."/>
            <person name="Sensabaugh G.F."/>
            <person name="Perdreau-Remington F."/>
        </authorList>
    </citation>
    <scope>NUCLEOTIDE SEQUENCE [LARGE SCALE GENOMIC DNA]</scope>
    <source>
        <strain>USA300</strain>
    </source>
</reference>